<name>MOAA_STRCO</name>
<keyword id="KW-0004">4Fe-4S</keyword>
<keyword id="KW-0342">GTP-binding</keyword>
<keyword id="KW-0408">Iron</keyword>
<keyword id="KW-0411">Iron-sulfur</keyword>
<keyword id="KW-0456">Lyase</keyword>
<keyword id="KW-0479">Metal-binding</keyword>
<keyword id="KW-0501">Molybdenum cofactor biosynthesis</keyword>
<keyword id="KW-0547">Nucleotide-binding</keyword>
<keyword id="KW-1185">Reference proteome</keyword>
<keyword id="KW-0949">S-adenosyl-L-methionine</keyword>
<accession>Q9RJ47</accession>
<sequence length="341" mass="37503">MLRRSASREGAHVLIDTYGRVATDLRVSLTDRCNLRCTYCMPEEGLQWLAKPDLLTDDEIVRLIDIAVTSLGIEEVRFTGGEPLLRPGLVGIVERVAALEPRPQMSLTTNGIGLRRTATALKAAGLDRVNVSLDTLRPDVFKTLTRRDRHKDVLEGLAAAREAGLTPVKVNSVLMPGLNDDEAPDLLAWAVEHDYELRFIEQMPLDAQHGWKREGMVTAGDILTSLRTRFELTAEGSEERGSAPAERWLVDGGPHRVGVIASVTRPFCSACDRTRLTADGQVRTCLFATEETDLRAALRSDAPDEEIARIWRLAMWGKKAGAGLDDPTFVQPDRPMSAIGG</sequence>
<proteinExistence type="inferred from homology"/>
<feature type="chain" id="PRO_0000153002" description="GTP 3',8-cyclase">
    <location>
        <begin position="1"/>
        <end position="341"/>
    </location>
</feature>
<feature type="domain" description="Radical SAM core" evidence="2">
    <location>
        <begin position="17"/>
        <end position="235"/>
    </location>
</feature>
<feature type="binding site" evidence="1">
    <location>
        <position position="26"/>
    </location>
    <ligand>
        <name>GTP</name>
        <dbReference type="ChEBI" id="CHEBI:37565"/>
    </ligand>
</feature>
<feature type="binding site" evidence="1">
    <location>
        <position position="33"/>
    </location>
    <ligand>
        <name>[4Fe-4S] cluster</name>
        <dbReference type="ChEBI" id="CHEBI:49883"/>
        <label>1</label>
        <note>4Fe-4S-S-AdoMet</note>
    </ligand>
</feature>
<feature type="binding site" evidence="1">
    <location>
        <position position="37"/>
    </location>
    <ligand>
        <name>[4Fe-4S] cluster</name>
        <dbReference type="ChEBI" id="CHEBI:49883"/>
        <label>1</label>
        <note>4Fe-4S-S-AdoMet</note>
    </ligand>
</feature>
<feature type="binding site" evidence="1">
    <location>
        <position position="39"/>
    </location>
    <ligand>
        <name>S-adenosyl-L-methionine</name>
        <dbReference type="ChEBI" id="CHEBI:59789"/>
    </ligand>
</feature>
<feature type="binding site" evidence="1">
    <location>
        <position position="40"/>
    </location>
    <ligand>
        <name>[4Fe-4S] cluster</name>
        <dbReference type="ChEBI" id="CHEBI:49883"/>
        <label>1</label>
        <note>4Fe-4S-S-AdoMet</note>
    </ligand>
</feature>
<feature type="binding site" evidence="1">
    <location>
        <position position="77"/>
    </location>
    <ligand>
        <name>GTP</name>
        <dbReference type="ChEBI" id="CHEBI:37565"/>
    </ligand>
</feature>
<feature type="binding site" evidence="1">
    <location>
        <position position="81"/>
    </location>
    <ligand>
        <name>S-adenosyl-L-methionine</name>
        <dbReference type="ChEBI" id="CHEBI:59789"/>
    </ligand>
</feature>
<feature type="binding site" evidence="1">
    <location>
        <position position="108"/>
    </location>
    <ligand>
        <name>GTP</name>
        <dbReference type="ChEBI" id="CHEBI:37565"/>
    </ligand>
</feature>
<feature type="binding site" evidence="1">
    <location>
        <position position="132"/>
    </location>
    <ligand>
        <name>S-adenosyl-L-methionine</name>
        <dbReference type="ChEBI" id="CHEBI:59789"/>
    </ligand>
</feature>
<feature type="binding site" evidence="1">
    <location>
        <position position="169"/>
    </location>
    <ligand>
        <name>GTP</name>
        <dbReference type="ChEBI" id="CHEBI:37565"/>
    </ligand>
</feature>
<feature type="binding site" evidence="1">
    <location>
        <position position="203"/>
    </location>
    <ligand>
        <name>S-adenosyl-L-methionine</name>
        <dbReference type="ChEBI" id="CHEBI:59789"/>
    </ligand>
</feature>
<feature type="binding site" evidence="1">
    <location>
        <position position="268"/>
    </location>
    <ligand>
        <name>[4Fe-4S] cluster</name>
        <dbReference type="ChEBI" id="CHEBI:49883"/>
        <label>2</label>
        <note>4Fe-4S-substrate</note>
    </ligand>
</feature>
<feature type="binding site" evidence="1">
    <location>
        <position position="271"/>
    </location>
    <ligand>
        <name>[4Fe-4S] cluster</name>
        <dbReference type="ChEBI" id="CHEBI:49883"/>
        <label>2</label>
        <note>4Fe-4S-substrate</note>
    </ligand>
</feature>
<feature type="binding site" evidence="1">
    <location>
        <begin position="273"/>
        <end position="275"/>
    </location>
    <ligand>
        <name>GTP</name>
        <dbReference type="ChEBI" id="CHEBI:37565"/>
    </ligand>
</feature>
<feature type="binding site" evidence="1">
    <location>
        <position position="285"/>
    </location>
    <ligand>
        <name>[4Fe-4S] cluster</name>
        <dbReference type="ChEBI" id="CHEBI:49883"/>
        <label>2</label>
        <note>4Fe-4S-substrate</note>
    </ligand>
</feature>
<dbReference type="EC" id="4.1.99.22" evidence="1"/>
<dbReference type="EMBL" id="AL939110">
    <property type="protein sequence ID" value="CAB59437.1"/>
    <property type="molecule type" value="Genomic_DNA"/>
</dbReference>
<dbReference type="RefSeq" id="NP_626089.1">
    <property type="nucleotide sequence ID" value="NC_003888.3"/>
</dbReference>
<dbReference type="SMR" id="Q9RJ47"/>
<dbReference type="FunCoup" id="Q9RJ47">
    <property type="interactions" value="155"/>
</dbReference>
<dbReference type="STRING" id="100226.gene:17759418"/>
<dbReference type="PaxDb" id="100226-SCO1821"/>
<dbReference type="KEGG" id="sco:SCO1821"/>
<dbReference type="PATRIC" id="fig|100226.15.peg.1843"/>
<dbReference type="eggNOG" id="COG2896">
    <property type="taxonomic scope" value="Bacteria"/>
</dbReference>
<dbReference type="HOGENOM" id="CLU_009273_0_1_11"/>
<dbReference type="InParanoid" id="Q9RJ47"/>
<dbReference type="OrthoDB" id="9763993at2"/>
<dbReference type="PhylomeDB" id="Q9RJ47"/>
<dbReference type="UniPathway" id="UPA00344"/>
<dbReference type="Proteomes" id="UP000001973">
    <property type="component" value="Chromosome"/>
</dbReference>
<dbReference type="GO" id="GO:0051539">
    <property type="term" value="F:4 iron, 4 sulfur cluster binding"/>
    <property type="evidence" value="ECO:0007669"/>
    <property type="project" value="UniProtKB-UniRule"/>
</dbReference>
<dbReference type="GO" id="GO:0061799">
    <property type="term" value="F:cyclic pyranopterin monophosphate synthase activity"/>
    <property type="evidence" value="ECO:0000318"/>
    <property type="project" value="GO_Central"/>
</dbReference>
<dbReference type="GO" id="GO:0061798">
    <property type="term" value="F:GTP 3',8'-cyclase activity"/>
    <property type="evidence" value="ECO:0000318"/>
    <property type="project" value="GO_Central"/>
</dbReference>
<dbReference type="GO" id="GO:0005525">
    <property type="term" value="F:GTP binding"/>
    <property type="evidence" value="ECO:0007669"/>
    <property type="project" value="UniProtKB-UniRule"/>
</dbReference>
<dbReference type="GO" id="GO:0046872">
    <property type="term" value="F:metal ion binding"/>
    <property type="evidence" value="ECO:0007669"/>
    <property type="project" value="UniProtKB-KW"/>
</dbReference>
<dbReference type="GO" id="GO:1904047">
    <property type="term" value="F:S-adenosyl-L-methionine binding"/>
    <property type="evidence" value="ECO:0007669"/>
    <property type="project" value="UniProtKB-UniRule"/>
</dbReference>
<dbReference type="GO" id="GO:0006777">
    <property type="term" value="P:Mo-molybdopterin cofactor biosynthetic process"/>
    <property type="evidence" value="ECO:0000318"/>
    <property type="project" value="GO_Central"/>
</dbReference>
<dbReference type="CDD" id="cd01335">
    <property type="entry name" value="Radical_SAM"/>
    <property type="match status" value="1"/>
</dbReference>
<dbReference type="CDD" id="cd21117">
    <property type="entry name" value="Twitch_MoaA"/>
    <property type="match status" value="1"/>
</dbReference>
<dbReference type="Gene3D" id="3.20.20.70">
    <property type="entry name" value="Aldolase class I"/>
    <property type="match status" value="1"/>
</dbReference>
<dbReference type="HAMAP" id="MF_01225_B">
    <property type="entry name" value="MoaA_B"/>
    <property type="match status" value="1"/>
</dbReference>
<dbReference type="InterPro" id="IPR013785">
    <property type="entry name" value="Aldolase_TIM"/>
</dbReference>
<dbReference type="InterPro" id="IPR006638">
    <property type="entry name" value="Elp3/MiaA/NifB-like_rSAM"/>
</dbReference>
<dbReference type="InterPro" id="IPR013483">
    <property type="entry name" value="MoaA"/>
</dbReference>
<dbReference type="InterPro" id="IPR000385">
    <property type="entry name" value="MoaA_NifB_PqqE_Fe-S-bd_CS"/>
</dbReference>
<dbReference type="InterPro" id="IPR010505">
    <property type="entry name" value="MoaA_twitch"/>
</dbReference>
<dbReference type="InterPro" id="IPR050105">
    <property type="entry name" value="MoCo_biosynth_MoaA/MoaC"/>
</dbReference>
<dbReference type="InterPro" id="IPR007197">
    <property type="entry name" value="rSAM"/>
</dbReference>
<dbReference type="NCBIfam" id="TIGR02666">
    <property type="entry name" value="moaA"/>
    <property type="match status" value="1"/>
</dbReference>
<dbReference type="PANTHER" id="PTHR22960:SF0">
    <property type="entry name" value="MOLYBDENUM COFACTOR BIOSYNTHESIS PROTEIN 1"/>
    <property type="match status" value="1"/>
</dbReference>
<dbReference type="PANTHER" id="PTHR22960">
    <property type="entry name" value="MOLYBDOPTERIN COFACTOR SYNTHESIS PROTEIN A"/>
    <property type="match status" value="1"/>
</dbReference>
<dbReference type="Pfam" id="PF13353">
    <property type="entry name" value="Fer4_12"/>
    <property type="match status" value="1"/>
</dbReference>
<dbReference type="Pfam" id="PF06463">
    <property type="entry name" value="Mob_synth_C"/>
    <property type="match status" value="1"/>
</dbReference>
<dbReference type="Pfam" id="PF04055">
    <property type="entry name" value="Radical_SAM"/>
    <property type="match status" value="1"/>
</dbReference>
<dbReference type="SFLD" id="SFLDG01383">
    <property type="entry name" value="cyclic_pyranopterin_phosphate"/>
    <property type="match status" value="1"/>
</dbReference>
<dbReference type="SFLD" id="SFLDG01072">
    <property type="entry name" value="dehydrogenase_like"/>
    <property type="match status" value="1"/>
</dbReference>
<dbReference type="SMART" id="SM00729">
    <property type="entry name" value="Elp3"/>
    <property type="match status" value="1"/>
</dbReference>
<dbReference type="SUPFAM" id="SSF102114">
    <property type="entry name" value="Radical SAM enzymes"/>
    <property type="match status" value="1"/>
</dbReference>
<dbReference type="PROSITE" id="PS01305">
    <property type="entry name" value="MOAA_NIFB_PQQE"/>
    <property type="match status" value="1"/>
</dbReference>
<dbReference type="PROSITE" id="PS51918">
    <property type="entry name" value="RADICAL_SAM"/>
    <property type="match status" value="1"/>
</dbReference>
<gene>
    <name evidence="1" type="primary">moaA</name>
    <name type="ordered locus">SCO1821</name>
    <name type="ORF">SCI8.06c</name>
</gene>
<protein>
    <recommendedName>
        <fullName evidence="1">GTP 3',8-cyclase</fullName>
        <ecNumber evidence="1">4.1.99.22</ecNumber>
    </recommendedName>
    <alternativeName>
        <fullName evidence="1">Molybdenum cofactor biosynthesis protein A</fullName>
    </alternativeName>
</protein>
<evidence type="ECO:0000255" key="1">
    <source>
        <dbReference type="HAMAP-Rule" id="MF_01225"/>
    </source>
</evidence>
<evidence type="ECO:0000255" key="2">
    <source>
        <dbReference type="PROSITE-ProRule" id="PRU01266"/>
    </source>
</evidence>
<reference key="1">
    <citation type="journal article" date="2002" name="Nature">
        <title>Complete genome sequence of the model actinomycete Streptomyces coelicolor A3(2).</title>
        <authorList>
            <person name="Bentley S.D."/>
            <person name="Chater K.F."/>
            <person name="Cerdeno-Tarraga A.-M."/>
            <person name="Challis G.L."/>
            <person name="Thomson N.R."/>
            <person name="James K.D."/>
            <person name="Harris D.E."/>
            <person name="Quail M.A."/>
            <person name="Kieser H."/>
            <person name="Harper D."/>
            <person name="Bateman A."/>
            <person name="Brown S."/>
            <person name="Chandra G."/>
            <person name="Chen C.W."/>
            <person name="Collins M."/>
            <person name="Cronin A."/>
            <person name="Fraser A."/>
            <person name="Goble A."/>
            <person name="Hidalgo J."/>
            <person name="Hornsby T."/>
            <person name="Howarth S."/>
            <person name="Huang C.-H."/>
            <person name="Kieser T."/>
            <person name="Larke L."/>
            <person name="Murphy L.D."/>
            <person name="Oliver K."/>
            <person name="O'Neil S."/>
            <person name="Rabbinowitsch E."/>
            <person name="Rajandream M.A."/>
            <person name="Rutherford K.M."/>
            <person name="Rutter S."/>
            <person name="Seeger K."/>
            <person name="Saunders D."/>
            <person name="Sharp S."/>
            <person name="Squares R."/>
            <person name="Squares S."/>
            <person name="Taylor K."/>
            <person name="Warren T."/>
            <person name="Wietzorrek A."/>
            <person name="Woodward J.R."/>
            <person name="Barrell B.G."/>
            <person name="Parkhill J."/>
            <person name="Hopwood D.A."/>
        </authorList>
    </citation>
    <scope>NUCLEOTIDE SEQUENCE [LARGE SCALE GENOMIC DNA]</scope>
    <source>
        <strain>ATCC BAA-471 / A3(2) / M145</strain>
    </source>
</reference>
<organism>
    <name type="scientific">Streptomyces coelicolor (strain ATCC BAA-471 / A3(2) / M145)</name>
    <dbReference type="NCBI Taxonomy" id="100226"/>
    <lineage>
        <taxon>Bacteria</taxon>
        <taxon>Bacillati</taxon>
        <taxon>Actinomycetota</taxon>
        <taxon>Actinomycetes</taxon>
        <taxon>Kitasatosporales</taxon>
        <taxon>Streptomycetaceae</taxon>
        <taxon>Streptomyces</taxon>
        <taxon>Streptomyces albidoflavus group</taxon>
    </lineage>
</organism>
<comment type="function">
    <text evidence="1">Catalyzes the cyclization of GTP to (8S)-3',8-cyclo-7,8-dihydroguanosine 5'-triphosphate.</text>
</comment>
<comment type="catalytic activity">
    <reaction evidence="1">
        <text>GTP + AH2 + S-adenosyl-L-methionine = (8S)-3',8-cyclo-7,8-dihydroguanosine 5'-triphosphate + 5'-deoxyadenosine + L-methionine + A + H(+)</text>
        <dbReference type="Rhea" id="RHEA:49576"/>
        <dbReference type="ChEBI" id="CHEBI:13193"/>
        <dbReference type="ChEBI" id="CHEBI:15378"/>
        <dbReference type="ChEBI" id="CHEBI:17319"/>
        <dbReference type="ChEBI" id="CHEBI:17499"/>
        <dbReference type="ChEBI" id="CHEBI:37565"/>
        <dbReference type="ChEBI" id="CHEBI:57844"/>
        <dbReference type="ChEBI" id="CHEBI:59789"/>
        <dbReference type="ChEBI" id="CHEBI:131766"/>
        <dbReference type="EC" id="4.1.99.22"/>
    </reaction>
</comment>
<comment type="cofactor">
    <cofactor evidence="1">
        <name>[4Fe-4S] cluster</name>
        <dbReference type="ChEBI" id="CHEBI:49883"/>
    </cofactor>
    <text evidence="1">Binds 2 [4Fe-4S] clusters. Binds 1 [4Fe-4S] cluster coordinated with 3 cysteines and an exchangeable S-adenosyl-L-methionine and 1 [4Fe-4S] cluster coordinated with 3 cysteines and the GTP-derived substrate.</text>
</comment>
<comment type="pathway">
    <text evidence="1">Cofactor biosynthesis; molybdopterin biosynthesis.</text>
</comment>
<comment type="subunit">
    <text evidence="1">Monomer and homodimer.</text>
</comment>
<comment type="similarity">
    <text evidence="1">Belongs to the radical SAM superfamily. MoaA family.</text>
</comment>